<keyword id="KW-0021">Allosteric enzyme</keyword>
<keyword id="KW-0067">ATP-binding</keyword>
<keyword id="KW-0963">Cytoplasm</keyword>
<keyword id="KW-0418">Kinase</keyword>
<keyword id="KW-0547">Nucleotide-binding</keyword>
<keyword id="KW-0665">Pyrimidine biosynthesis</keyword>
<keyword id="KW-0808">Transferase</keyword>
<sequence>MSQVKYKRIILKVSGEALAGEKGTGINPEVIKHLAEEIKSVHDMGVEIGIVCGGGNMWRGETGANLGMERAQADYMGMLATIMNGLALQDGLENLGVPTRVQTSIEMRQIAEPYIRRKAVRHLEKGRVVIFGGGTGNPYFSTDTTAALRAAEINADVILMAKNGVDGVYSADPKVDPNAKKYSELTQLDLISKNLKVMDSTASSLSMDNNIPLVVFNVNKPGNIKKVVMGENIGTVIKGDK</sequence>
<feature type="chain" id="PRO_1000053942" description="Uridylate kinase">
    <location>
        <begin position="1"/>
        <end position="241"/>
    </location>
</feature>
<feature type="region of interest" description="Involved in allosteric activation by GTP" evidence="1">
    <location>
        <begin position="20"/>
        <end position="25"/>
    </location>
</feature>
<feature type="binding site" evidence="1">
    <location>
        <begin position="12"/>
        <end position="15"/>
    </location>
    <ligand>
        <name>ATP</name>
        <dbReference type="ChEBI" id="CHEBI:30616"/>
    </ligand>
</feature>
<feature type="binding site" evidence="1">
    <location>
        <position position="54"/>
    </location>
    <ligand>
        <name>UMP</name>
        <dbReference type="ChEBI" id="CHEBI:57865"/>
    </ligand>
</feature>
<feature type="binding site" evidence="1">
    <location>
        <position position="55"/>
    </location>
    <ligand>
        <name>ATP</name>
        <dbReference type="ChEBI" id="CHEBI:30616"/>
    </ligand>
</feature>
<feature type="binding site" evidence="1">
    <location>
        <position position="59"/>
    </location>
    <ligand>
        <name>ATP</name>
        <dbReference type="ChEBI" id="CHEBI:30616"/>
    </ligand>
</feature>
<feature type="binding site" evidence="1">
    <location>
        <position position="74"/>
    </location>
    <ligand>
        <name>UMP</name>
        <dbReference type="ChEBI" id="CHEBI:57865"/>
    </ligand>
</feature>
<feature type="binding site" evidence="1">
    <location>
        <begin position="135"/>
        <end position="142"/>
    </location>
    <ligand>
        <name>UMP</name>
        <dbReference type="ChEBI" id="CHEBI:57865"/>
    </ligand>
</feature>
<feature type="binding site" evidence="1">
    <location>
        <position position="163"/>
    </location>
    <ligand>
        <name>ATP</name>
        <dbReference type="ChEBI" id="CHEBI:30616"/>
    </ligand>
</feature>
<feature type="binding site" evidence="1">
    <location>
        <position position="169"/>
    </location>
    <ligand>
        <name>ATP</name>
        <dbReference type="ChEBI" id="CHEBI:30616"/>
    </ligand>
</feature>
<feature type="binding site" evidence="1">
    <location>
        <position position="172"/>
    </location>
    <ligand>
        <name>ATP</name>
        <dbReference type="ChEBI" id="CHEBI:30616"/>
    </ligand>
</feature>
<name>PYRH_LACJO</name>
<dbReference type="EC" id="2.7.4.22" evidence="1"/>
<dbReference type="EMBL" id="AE017198">
    <property type="protein sequence ID" value="AAS09266.1"/>
    <property type="molecule type" value="Genomic_DNA"/>
</dbReference>
<dbReference type="RefSeq" id="WP_004895268.1">
    <property type="nucleotide sequence ID" value="NC_005362.1"/>
</dbReference>
<dbReference type="SMR" id="Q74IR8"/>
<dbReference type="GeneID" id="83570175"/>
<dbReference type="KEGG" id="ljo:LJ_1498"/>
<dbReference type="eggNOG" id="COG0528">
    <property type="taxonomic scope" value="Bacteria"/>
</dbReference>
<dbReference type="HOGENOM" id="CLU_033861_0_0_9"/>
<dbReference type="UniPathway" id="UPA00159">
    <property type="reaction ID" value="UER00275"/>
</dbReference>
<dbReference type="Proteomes" id="UP000000581">
    <property type="component" value="Chromosome"/>
</dbReference>
<dbReference type="GO" id="GO:0005737">
    <property type="term" value="C:cytoplasm"/>
    <property type="evidence" value="ECO:0007669"/>
    <property type="project" value="UniProtKB-SubCell"/>
</dbReference>
<dbReference type="GO" id="GO:0005524">
    <property type="term" value="F:ATP binding"/>
    <property type="evidence" value="ECO:0007669"/>
    <property type="project" value="UniProtKB-KW"/>
</dbReference>
<dbReference type="GO" id="GO:0033862">
    <property type="term" value="F:UMP kinase activity"/>
    <property type="evidence" value="ECO:0007669"/>
    <property type="project" value="UniProtKB-EC"/>
</dbReference>
<dbReference type="GO" id="GO:0044210">
    <property type="term" value="P:'de novo' CTP biosynthetic process"/>
    <property type="evidence" value="ECO:0007669"/>
    <property type="project" value="UniProtKB-UniRule"/>
</dbReference>
<dbReference type="GO" id="GO:0006225">
    <property type="term" value="P:UDP biosynthetic process"/>
    <property type="evidence" value="ECO:0007669"/>
    <property type="project" value="TreeGrafter"/>
</dbReference>
<dbReference type="CDD" id="cd04254">
    <property type="entry name" value="AAK_UMPK-PyrH-Ec"/>
    <property type="match status" value="1"/>
</dbReference>
<dbReference type="FunFam" id="3.40.1160.10:FF:000001">
    <property type="entry name" value="Uridylate kinase"/>
    <property type="match status" value="1"/>
</dbReference>
<dbReference type="Gene3D" id="3.40.1160.10">
    <property type="entry name" value="Acetylglutamate kinase-like"/>
    <property type="match status" value="1"/>
</dbReference>
<dbReference type="HAMAP" id="MF_01220_B">
    <property type="entry name" value="PyrH_B"/>
    <property type="match status" value="1"/>
</dbReference>
<dbReference type="InterPro" id="IPR036393">
    <property type="entry name" value="AceGlu_kinase-like_sf"/>
</dbReference>
<dbReference type="InterPro" id="IPR001048">
    <property type="entry name" value="Asp/Glu/Uridylate_kinase"/>
</dbReference>
<dbReference type="InterPro" id="IPR011817">
    <property type="entry name" value="Uridylate_kinase"/>
</dbReference>
<dbReference type="InterPro" id="IPR015963">
    <property type="entry name" value="Uridylate_kinase_bac"/>
</dbReference>
<dbReference type="NCBIfam" id="TIGR02075">
    <property type="entry name" value="pyrH_bact"/>
    <property type="match status" value="1"/>
</dbReference>
<dbReference type="PANTHER" id="PTHR42833">
    <property type="entry name" value="URIDYLATE KINASE"/>
    <property type="match status" value="1"/>
</dbReference>
<dbReference type="PANTHER" id="PTHR42833:SF4">
    <property type="entry name" value="URIDYLATE KINASE PUMPKIN, CHLOROPLASTIC"/>
    <property type="match status" value="1"/>
</dbReference>
<dbReference type="Pfam" id="PF00696">
    <property type="entry name" value="AA_kinase"/>
    <property type="match status" value="1"/>
</dbReference>
<dbReference type="PIRSF" id="PIRSF005650">
    <property type="entry name" value="Uridylate_kin"/>
    <property type="match status" value="1"/>
</dbReference>
<dbReference type="SUPFAM" id="SSF53633">
    <property type="entry name" value="Carbamate kinase-like"/>
    <property type="match status" value="1"/>
</dbReference>
<organism>
    <name type="scientific">Lactobacillus johnsonii (strain CNCM I-12250 / La1 / NCC 533)</name>
    <dbReference type="NCBI Taxonomy" id="257314"/>
    <lineage>
        <taxon>Bacteria</taxon>
        <taxon>Bacillati</taxon>
        <taxon>Bacillota</taxon>
        <taxon>Bacilli</taxon>
        <taxon>Lactobacillales</taxon>
        <taxon>Lactobacillaceae</taxon>
        <taxon>Lactobacillus</taxon>
    </lineage>
</organism>
<gene>
    <name evidence="1" type="primary">pyrH</name>
    <name type="ordered locus">LJ_1498</name>
</gene>
<evidence type="ECO:0000255" key="1">
    <source>
        <dbReference type="HAMAP-Rule" id="MF_01220"/>
    </source>
</evidence>
<protein>
    <recommendedName>
        <fullName evidence="1">Uridylate kinase</fullName>
        <shortName evidence="1">UK</shortName>
        <ecNumber evidence="1">2.7.4.22</ecNumber>
    </recommendedName>
    <alternativeName>
        <fullName evidence="1">Uridine monophosphate kinase</fullName>
        <shortName evidence="1">UMP kinase</shortName>
        <shortName evidence="1">UMPK</shortName>
    </alternativeName>
</protein>
<comment type="function">
    <text evidence="1">Catalyzes the reversible phosphorylation of UMP to UDP.</text>
</comment>
<comment type="catalytic activity">
    <reaction evidence="1">
        <text>UMP + ATP = UDP + ADP</text>
        <dbReference type="Rhea" id="RHEA:24400"/>
        <dbReference type="ChEBI" id="CHEBI:30616"/>
        <dbReference type="ChEBI" id="CHEBI:57865"/>
        <dbReference type="ChEBI" id="CHEBI:58223"/>
        <dbReference type="ChEBI" id="CHEBI:456216"/>
        <dbReference type="EC" id="2.7.4.22"/>
    </reaction>
</comment>
<comment type="activity regulation">
    <text evidence="1">Allosterically activated by GTP. Inhibited by UTP.</text>
</comment>
<comment type="pathway">
    <text evidence="1">Pyrimidine metabolism; CTP biosynthesis via de novo pathway; UDP from UMP (UMPK route): step 1/1.</text>
</comment>
<comment type="subunit">
    <text evidence="1">Homohexamer.</text>
</comment>
<comment type="subcellular location">
    <subcellularLocation>
        <location evidence="1">Cytoplasm</location>
    </subcellularLocation>
</comment>
<comment type="similarity">
    <text evidence="1">Belongs to the UMP kinase family.</text>
</comment>
<accession>Q74IR8</accession>
<proteinExistence type="inferred from homology"/>
<reference key="1">
    <citation type="journal article" date="2004" name="Proc. Natl. Acad. Sci. U.S.A.">
        <title>The genome sequence of the probiotic intestinal bacterium Lactobacillus johnsonii NCC 533.</title>
        <authorList>
            <person name="Pridmore R.D."/>
            <person name="Berger B."/>
            <person name="Desiere F."/>
            <person name="Vilanova D."/>
            <person name="Barretto C."/>
            <person name="Pittet A.-C."/>
            <person name="Zwahlen M.-C."/>
            <person name="Rouvet M."/>
            <person name="Altermann E."/>
            <person name="Barrangou R."/>
            <person name="Mollet B."/>
            <person name="Mercenier A."/>
            <person name="Klaenhammer T."/>
            <person name="Arigoni F."/>
            <person name="Schell M.A."/>
        </authorList>
    </citation>
    <scope>NUCLEOTIDE SEQUENCE [LARGE SCALE GENOMIC DNA]</scope>
    <source>
        <strain>CNCM I-1225 / La1 / NCC 533</strain>
    </source>
</reference>